<proteinExistence type="evidence at protein level"/>
<accession>P58006</accession>
<accession>E9QPK0</accession>
<accession>Q7TNF3</accession>
<protein>
    <recommendedName>
        <fullName evidence="5">Sestrin-1</fullName>
        <ecNumber evidence="1">1.11.1.-</ecNumber>
    </recommendedName>
</protein>
<dbReference type="EC" id="1.11.1.-" evidence="1"/>
<dbReference type="EMBL" id="AC115297">
    <property type="status" value="NOT_ANNOTATED_CDS"/>
    <property type="molecule type" value="Genomic_DNA"/>
</dbReference>
<dbReference type="EMBL" id="AC165442">
    <property type="status" value="NOT_ANNOTATED_CDS"/>
    <property type="molecule type" value="Genomic_DNA"/>
</dbReference>
<dbReference type="EMBL" id="BC055753">
    <property type="protein sequence ID" value="AAH55753.1"/>
    <property type="molecule type" value="mRNA"/>
</dbReference>
<dbReference type="CCDS" id="CCDS23809.1"/>
<dbReference type="RefSeq" id="NP_001013388.2">
    <property type="nucleotide sequence ID" value="NM_001013370.2"/>
</dbReference>
<dbReference type="SMR" id="P58006"/>
<dbReference type="FunCoup" id="P58006">
    <property type="interactions" value="2249"/>
</dbReference>
<dbReference type="STRING" id="10090.ENSMUSP00000097515"/>
<dbReference type="iPTMnet" id="P58006"/>
<dbReference type="PhosphoSitePlus" id="P58006"/>
<dbReference type="PaxDb" id="10090-ENSMUSP00000097515"/>
<dbReference type="ProteomicsDB" id="256624"/>
<dbReference type="Pumba" id="P58006"/>
<dbReference type="Antibodypedia" id="32228">
    <property type="antibodies" value="274 antibodies from 32 providers"/>
</dbReference>
<dbReference type="DNASU" id="140742"/>
<dbReference type="Ensembl" id="ENSMUST00000041438.7">
    <property type="protein sequence ID" value="ENSMUSP00000043034.7"/>
    <property type="gene ID" value="ENSMUSG00000038332.14"/>
</dbReference>
<dbReference type="GeneID" id="140742"/>
<dbReference type="KEGG" id="mmu:140742"/>
<dbReference type="UCSC" id="uc007eyf.2">
    <property type="organism name" value="mouse"/>
</dbReference>
<dbReference type="AGR" id="MGI:2155278"/>
<dbReference type="CTD" id="27244"/>
<dbReference type="MGI" id="MGI:2155278">
    <property type="gene designation" value="Sesn1"/>
</dbReference>
<dbReference type="VEuPathDB" id="HostDB:ENSMUSG00000038332"/>
<dbReference type="eggNOG" id="KOG3746">
    <property type="taxonomic scope" value="Eukaryota"/>
</dbReference>
<dbReference type="GeneTree" id="ENSGT00950000183168"/>
<dbReference type="HOGENOM" id="CLU_020429_2_0_1"/>
<dbReference type="InParanoid" id="P58006"/>
<dbReference type="OMA" id="CDQVTQV"/>
<dbReference type="OrthoDB" id="337464at2759"/>
<dbReference type="Reactome" id="R-MMU-5628897">
    <property type="pathway name" value="TP53 Regulates Metabolic Genes"/>
</dbReference>
<dbReference type="Reactome" id="R-MMU-9639288">
    <property type="pathway name" value="Amino acids regulate mTORC1"/>
</dbReference>
<dbReference type="Reactome" id="R-MMU-9755511">
    <property type="pathway name" value="KEAP1-NFE2L2 pathway"/>
</dbReference>
<dbReference type="BioGRID-ORCS" id="140742">
    <property type="hits" value="1 hit in 77 CRISPR screens"/>
</dbReference>
<dbReference type="ChiTaRS" id="Sesn1">
    <property type="organism name" value="mouse"/>
</dbReference>
<dbReference type="PRO" id="PR:P58006"/>
<dbReference type="Proteomes" id="UP000000589">
    <property type="component" value="Chromosome 10"/>
</dbReference>
<dbReference type="RNAct" id="P58006">
    <property type="molecule type" value="protein"/>
</dbReference>
<dbReference type="Bgee" id="ENSMUSG00000038332">
    <property type="expression patterns" value="Expressed in myocardium of ventricle and 256 other cell types or tissues"/>
</dbReference>
<dbReference type="ExpressionAtlas" id="P58006">
    <property type="expression patterns" value="baseline and differential"/>
</dbReference>
<dbReference type="GO" id="GO:0005737">
    <property type="term" value="C:cytoplasm"/>
    <property type="evidence" value="ECO:0000250"/>
    <property type="project" value="UniProtKB"/>
</dbReference>
<dbReference type="GO" id="GO:0001650">
    <property type="term" value="C:fibrillar center"/>
    <property type="evidence" value="ECO:0007669"/>
    <property type="project" value="Ensembl"/>
</dbReference>
<dbReference type="GO" id="GO:0061700">
    <property type="term" value="C:GATOR2 complex"/>
    <property type="evidence" value="ECO:0007669"/>
    <property type="project" value="Ensembl"/>
</dbReference>
<dbReference type="GO" id="GO:0005654">
    <property type="term" value="C:nucleoplasm"/>
    <property type="evidence" value="ECO:0007669"/>
    <property type="project" value="Ensembl"/>
</dbReference>
<dbReference type="GO" id="GO:0005634">
    <property type="term" value="C:nucleus"/>
    <property type="evidence" value="ECO:0000250"/>
    <property type="project" value="UniProtKB"/>
</dbReference>
<dbReference type="GO" id="GO:0070728">
    <property type="term" value="F:L-leucine binding"/>
    <property type="evidence" value="ECO:0000250"/>
    <property type="project" value="UniProtKB"/>
</dbReference>
<dbReference type="GO" id="GO:0016491">
    <property type="term" value="F:oxidoreductase activity"/>
    <property type="evidence" value="ECO:0007669"/>
    <property type="project" value="UniProtKB-KW"/>
</dbReference>
<dbReference type="GO" id="GO:0098869">
    <property type="term" value="P:cellular oxidant detoxification"/>
    <property type="evidence" value="ECO:0000250"/>
    <property type="project" value="UniProtKB"/>
</dbReference>
<dbReference type="GO" id="GO:0034198">
    <property type="term" value="P:cellular response to amino acid starvation"/>
    <property type="evidence" value="ECO:0000250"/>
    <property type="project" value="UniProtKB"/>
</dbReference>
<dbReference type="GO" id="GO:0071230">
    <property type="term" value="P:cellular response to amino acid stimulus"/>
    <property type="evidence" value="ECO:0000315"/>
    <property type="project" value="UniProtKB"/>
</dbReference>
<dbReference type="GO" id="GO:0042149">
    <property type="term" value="P:cellular response to glucose starvation"/>
    <property type="evidence" value="ECO:0007669"/>
    <property type="project" value="Ensembl"/>
</dbReference>
<dbReference type="GO" id="GO:0030308">
    <property type="term" value="P:negative regulation of cell growth"/>
    <property type="evidence" value="ECO:0000314"/>
    <property type="project" value="UniProtKB"/>
</dbReference>
<dbReference type="GO" id="GO:1904262">
    <property type="term" value="P:negative regulation of TORC1 signaling"/>
    <property type="evidence" value="ECO:0000315"/>
    <property type="project" value="UniProtKB"/>
</dbReference>
<dbReference type="GO" id="GO:0072593">
    <property type="term" value="P:reactive oxygen species metabolic process"/>
    <property type="evidence" value="ECO:0000250"/>
    <property type="project" value="UniProtKB"/>
</dbReference>
<dbReference type="GO" id="GO:0051896">
    <property type="term" value="P:regulation of phosphatidylinositol 3-kinase/protein kinase B signal transduction"/>
    <property type="evidence" value="ECO:0000314"/>
    <property type="project" value="MGI"/>
</dbReference>
<dbReference type="GO" id="GO:1901031">
    <property type="term" value="P:regulation of response to reactive oxygen species"/>
    <property type="evidence" value="ECO:0007669"/>
    <property type="project" value="InterPro"/>
</dbReference>
<dbReference type="FunFam" id="1.20.1290.10:FF:000001">
    <property type="entry name" value="Sestrin 1"/>
    <property type="match status" value="1"/>
</dbReference>
<dbReference type="Gene3D" id="1.20.1290.10">
    <property type="entry name" value="AhpD-like"/>
    <property type="match status" value="1"/>
</dbReference>
<dbReference type="InterPro" id="IPR029032">
    <property type="entry name" value="AhpD-like"/>
</dbReference>
<dbReference type="InterPro" id="IPR006730">
    <property type="entry name" value="Sestrin"/>
</dbReference>
<dbReference type="PANTHER" id="PTHR12474">
    <property type="entry name" value="P53 REGULATED PA26 NUCLEAR PROTEIN SESTRIN"/>
    <property type="match status" value="1"/>
</dbReference>
<dbReference type="PANTHER" id="PTHR12474:SF3">
    <property type="entry name" value="SESTRIN-1"/>
    <property type="match status" value="1"/>
</dbReference>
<dbReference type="Pfam" id="PF04636">
    <property type="entry name" value="PA26"/>
    <property type="match status" value="1"/>
</dbReference>
<dbReference type="SUPFAM" id="SSF69118">
    <property type="entry name" value="AhpD-like"/>
    <property type="match status" value="1"/>
</dbReference>
<keyword id="KW-0963">Cytoplasm</keyword>
<keyword id="KW-0539">Nucleus</keyword>
<keyword id="KW-0560">Oxidoreductase</keyword>
<keyword id="KW-0597">Phosphoprotein</keyword>
<keyword id="KW-1185">Reference proteome</keyword>
<organism>
    <name type="scientific">Mus musculus</name>
    <name type="common">Mouse</name>
    <dbReference type="NCBI Taxonomy" id="10090"/>
    <lineage>
        <taxon>Eukaryota</taxon>
        <taxon>Metazoa</taxon>
        <taxon>Chordata</taxon>
        <taxon>Craniata</taxon>
        <taxon>Vertebrata</taxon>
        <taxon>Euteleostomi</taxon>
        <taxon>Mammalia</taxon>
        <taxon>Eutheria</taxon>
        <taxon>Euarchontoglires</taxon>
        <taxon>Glires</taxon>
        <taxon>Rodentia</taxon>
        <taxon>Myomorpha</taxon>
        <taxon>Muroidea</taxon>
        <taxon>Muridae</taxon>
        <taxon>Murinae</taxon>
        <taxon>Mus</taxon>
        <taxon>Mus</taxon>
    </lineage>
</organism>
<reference key="1">
    <citation type="journal article" date="2009" name="PLoS Biol.">
        <title>Lineage-specific biology revealed by a finished genome assembly of the mouse.</title>
        <authorList>
            <person name="Church D.M."/>
            <person name="Goodstadt L."/>
            <person name="Hillier L.W."/>
            <person name="Zody M.C."/>
            <person name="Goldstein S."/>
            <person name="She X."/>
            <person name="Bult C.J."/>
            <person name="Agarwala R."/>
            <person name="Cherry J.L."/>
            <person name="DiCuccio M."/>
            <person name="Hlavina W."/>
            <person name="Kapustin Y."/>
            <person name="Meric P."/>
            <person name="Maglott D."/>
            <person name="Birtle Z."/>
            <person name="Marques A.C."/>
            <person name="Graves T."/>
            <person name="Zhou S."/>
            <person name="Teague B."/>
            <person name="Potamousis K."/>
            <person name="Churas C."/>
            <person name="Place M."/>
            <person name="Herschleb J."/>
            <person name="Runnheim R."/>
            <person name="Forrest D."/>
            <person name="Amos-Landgraf J."/>
            <person name="Schwartz D.C."/>
            <person name="Cheng Z."/>
            <person name="Lindblad-Toh K."/>
            <person name="Eichler E.E."/>
            <person name="Ponting C.P."/>
        </authorList>
    </citation>
    <scope>NUCLEOTIDE SEQUENCE [LARGE SCALE GENOMIC DNA]</scope>
    <source>
        <strain>C57BL/6J</strain>
    </source>
</reference>
<reference key="2">
    <citation type="journal article" date="2004" name="Genome Res.">
        <title>The status, quality, and expansion of the NIH full-length cDNA project: the Mammalian Gene Collection (MGC).</title>
        <authorList>
            <consortium name="The MGC Project Team"/>
        </authorList>
    </citation>
    <scope>NUCLEOTIDE SEQUENCE [LARGE SCALE MRNA]</scope>
    <source>
        <strain>C57BL/6J</strain>
        <tissue>Brain</tissue>
    </source>
</reference>
<reference key="3">
    <citation type="journal article" date="2003" name="Hum. Genet.">
        <title>PA26 is a candidate gene for heterotaxia in humans: identification of a novel PA26-related gene family in human and mouse.</title>
        <authorList>
            <person name="Peeters H."/>
            <person name="Debeer P."/>
            <person name="Bairoch A."/>
            <person name="Wilquet V."/>
            <person name="Huysmans C."/>
            <person name="Parthoens E."/>
            <person name="Fryns J.-P."/>
            <person name="Gewillig M."/>
            <person name="Nakamura Y."/>
            <person name="Niikawa N."/>
            <person name="Van De Ven W."/>
            <person name="Devriendt K."/>
        </authorList>
    </citation>
    <scope>RECONSTRUCTION FROM ESTS</scope>
</reference>
<reference key="4">
    <citation type="journal article" date="2010" name="Cell">
        <title>A tissue-specific atlas of mouse protein phosphorylation and expression.</title>
        <authorList>
            <person name="Huttlin E.L."/>
            <person name="Jedrychowski M.P."/>
            <person name="Elias J.E."/>
            <person name="Goswami T."/>
            <person name="Rad R."/>
            <person name="Beausoleil S.A."/>
            <person name="Villen J."/>
            <person name="Haas W."/>
            <person name="Sowa M.E."/>
            <person name="Gygi S.P."/>
        </authorList>
    </citation>
    <scope>IDENTIFICATION BY MASS SPECTROMETRY [LARGE SCALE ANALYSIS]</scope>
    <source>
        <tissue>Kidney</tissue>
    </source>
</reference>
<reference key="5">
    <citation type="journal article" date="2014" name="Cell">
        <title>Sestrins function as guanine nucleotide dissociation inhibitors for Rag GTPases to control mTORC1 signaling.</title>
        <authorList>
            <person name="Peng M."/>
            <person name="Yin N."/>
            <person name="Li M.O."/>
        </authorList>
    </citation>
    <scope>FUNCTION</scope>
    <scope>INTERACTION WITH RRAGA; RRAGB; RRAGC AND RRAGD</scope>
    <scope>TISSUE SPECIFICITY</scope>
    <scope>DISRUPTION PHENOTYPE</scope>
</reference>
<gene>
    <name evidence="6" type="primary">Sesn1</name>
    <name evidence="4" type="synonym">Pa26</name>
    <name evidence="4" type="synonym">Sest1</name>
</gene>
<evidence type="ECO:0000250" key="1">
    <source>
        <dbReference type="UniProtKB" id="P58004"/>
    </source>
</evidence>
<evidence type="ECO:0000250" key="2">
    <source>
        <dbReference type="UniProtKB" id="Q9Y6P5"/>
    </source>
</evidence>
<evidence type="ECO:0000269" key="3">
    <source>
    </source>
</evidence>
<evidence type="ECO:0000303" key="4">
    <source>
    </source>
</evidence>
<evidence type="ECO:0000305" key="5"/>
<evidence type="ECO:0000312" key="6">
    <source>
        <dbReference type="MGI" id="MGI:2155278"/>
    </source>
</evidence>
<sequence>MRLAAASNEAYAASLAVSELLSCHQCGGDRGQDEELGIRIPRPLGHGPSRFIPEKEMLQVGSEDAQMHALFADSFAALGRLDNITLVMVFHPQYLESFLKTQHYLLQMDGPLPLHYRHYIGIMAAARHQCSYLVNLHVSDFLHVGGDPKWLNGLENAPQKLQNLGELNKVLAHRPWLITKEHIEGLLKAEEHSWSLAELVHAVVLLTHYHSLASFTFGCGISPEIHCDGGHTFRPPSVSNYCICDITNGNHSVDEMQVNSAGNASVSDSFFEVEALMEKMRQLQECREEEEASQEEMASRFEMEKRESMFVFSSDDDEVTPARDVSRHFEDTSYGYKDFSRHGMHVPTFRVQDYCWEDHGYSLVNRLYPDVGQLIDEKFHIAYNLTYNTMAMHKDVDTSMLRRAIWNYIHCMFGIRYDDYDYGEINQLLDRSFKVYIKTVVCTPEKVTKRMYDSFWRQFKHSEKVHVNLLLIEARMQAELLYALRAITRYMT</sequence>
<name>SESN1_MOUSE</name>
<comment type="function">
    <text evidence="1 3">Functions as an intracellular leucine sensor that negatively regulates the TORC1 signaling pathway through the GATOR complex. In absence of leucine, binds the GATOR subcomplex GATOR2 and prevents TORC1 signaling. Binding of leucine to SESN2 disrupts its interaction with GATOR2 thereby activating the TORC1 signaling pathway (PubMed:25259925). This stress-inducible metabolic regulator may also play a role in protection against oxidative and genotoxic stresses. May positively regulate the transcription by NFE2L2 of genes involved in the response to oxidative stress by facilitating the SQSTM1-mediated autophagic degradation of KEAP1. Moreover, may prevent the accumulation of reactive oxygen species (ROS) through the alkylhydroperoxide reductase activity born by the N-terminal domain of the protein. Was originally reported to contribute to oxidative stress resistance by reducing PRDX1. However, this could not be confirmed (By similarity).</text>
</comment>
<comment type="catalytic activity">
    <reaction evidence="1">
        <text>a hydroperoxide + L-cysteinyl-[protein] = S-hydroxy-L-cysteinyl-[protein] + an alcohol</text>
        <dbReference type="Rhea" id="RHEA:67124"/>
        <dbReference type="Rhea" id="RHEA-COMP:10131"/>
        <dbReference type="Rhea" id="RHEA-COMP:17193"/>
        <dbReference type="ChEBI" id="CHEBI:29950"/>
        <dbReference type="ChEBI" id="CHEBI:30879"/>
        <dbReference type="ChEBI" id="CHEBI:35924"/>
        <dbReference type="ChEBI" id="CHEBI:61973"/>
    </reaction>
    <physiologicalReaction direction="left-to-right" evidence="1">
        <dbReference type="Rhea" id="RHEA:67125"/>
    </physiologicalReaction>
</comment>
<comment type="subunit">
    <text evidence="2 3">Interacts with the GATOR2 complex which is composed of MIOS, SEC13, SEH1L, WDR24 and WDR59; the interaction is negatively regulated by leucine (By similarity). Interacts with RRAGA, RRAGB, RRAGC and RRAGD; may function as a guanine nucleotide dissociation inhibitor for RRAGs and regulate them (PubMed:25259925). Interacts with KEAP1, RBX1 and SQSTM1; in the SQSTM1-dependent autophagic degradation of KEAP1. May interact with PRDX1 (By similarity).</text>
</comment>
<comment type="subcellular location">
    <subcellularLocation>
        <location evidence="2">Nucleus</location>
    </subcellularLocation>
    <subcellularLocation>
        <location evidence="2">Cytoplasm</location>
    </subcellularLocation>
</comment>
<comment type="tissue specificity">
    <text evidence="3">Highly expressed in heart and also detected in liver and skeletal muscles (at protein level).</text>
</comment>
<comment type="domain">
    <text evidence="1">The N-terminal domain may have an alkylhydroperoxide reductase activity.</text>
</comment>
<comment type="domain">
    <text evidence="1">The C-terminal domain mediates interaction with GATOR2 through which it regulates TORC1 signaling.</text>
</comment>
<comment type="disruption phenotype">
    <text evidence="3">Triple knockout mice lacking Sesn1, Sesn2 and Sesn3 do not display an embryonic lethal phenotype since they are born at an expected Mendelian ratio. Moreover, they are not distinguishable from their wild-type littermates. However, their survival at 10 days is dramatically affected. This is associated with a constitutive activation of TORC1 signaling in the liver, heart and skeletal muscle during postnatal fasting, that occurs between birth and suckling.</text>
</comment>
<comment type="similarity">
    <text evidence="5">Belongs to the sestrin family.</text>
</comment>
<feature type="chain" id="PRO_0000221179" description="Sestrin-1">
    <location>
        <begin position="1"/>
        <end position="492"/>
    </location>
</feature>
<feature type="region of interest" description="N-terminal domain; may mediate the alkylhydroperoxide reductase activity" evidence="1">
    <location>
        <begin position="71"/>
        <end position="252"/>
    </location>
</feature>
<feature type="region of interest" description="C-terminal domain; mediates TORC1 regulation" evidence="1">
    <location>
        <begin position="321"/>
        <end position="492"/>
    </location>
</feature>
<feature type="active site" description="Cysteine sulfenic acid (-SOH) intermediate" evidence="1">
    <location>
        <position position="130"/>
    </location>
</feature>
<feature type="binding site" evidence="1">
    <location>
        <begin position="386"/>
        <end position="389"/>
    </location>
    <ligand>
        <name>L-leucine</name>
        <dbReference type="ChEBI" id="CHEBI:57427"/>
    </ligand>
</feature>
<feature type="binding site" evidence="1">
    <location>
        <position position="398"/>
    </location>
    <ligand>
        <name>L-leucine</name>
        <dbReference type="ChEBI" id="CHEBI:57427"/>
    </ligand>
</feature>
<feature type="binding site" evidence="1">
    <location>
        <position position="463"/>
    </location>
    <ligand>
        <name>L-leucine</name>
        <dbReference type="ChEBI" id="CHEBI:57427"/>
    </ligand>
</feature>
<feature type="modified residue" description="Phosphoserine" evidence="2">
    <location>
        <position position="293"/>
    </location>
</feature>
<feature type="modified residue" description="Phosphoserine" evidence="2">
    <location>
        <position position="314"/>
    </location>
</feature>
<feature type="sequence conflict" description="In Ref. 2; AAH55753." evidence="5" ref="2">
    <original>A</original>
    <variation>P</variation>
    <location>
        <position position="382"/>
    </location>
</feature>